<reference key="1">
    <citation type="submission" date="2006-08" db="EMBL/GenBank/DDBJ databases">
        <title>Complete sequence of Shewanella frigidimarina NCIMB 400.</title>
        <authorList>
            <consortium name="US DOE Joint Genome Institute"/>
            <person name="Copeland A."/>
            <person name="Lucas S."/>
            <person name="Lapidus A."/>
            <person name="Barry K."/>
            <person name="Detter J.C."/>
            <person name="Glavina del Rio T."/>
            <person name="Hammon N."/>
            <person name="Israni S."/>
            <person name="Dalin E."/>
            <person name="Tice H."/>
            <person name="Pitluck S."/>
            <person name="Fredrickson J.K."/>
            <person name="Kolker E."/>
            <person name="McCuel L.A."/>
            <person name="DiChristina T."/>
            <person name="Nealson K.H."/>
            <person name="Newman D."/>
            <person name="Tiedje J.M."/>
            <person name="Zhou J."/>
            <person name="Romine M.F."/>
            <person name="Culley D.E."/>
            <person name="Serres M."/>
            <person name="Chertkov O."/>
            <person name="Brettin T."/>
            <person name="Bruce D."/>
            <person name="Han C."/>
            <person name="Tapia R."/>
            <person name="Gilna P."/>
            <person name="Schmutz J."/>
            <person name="Larimer F."/>
            <person name="Land M."/>
            <person name="Hauser L."/>
            <person name="Kyrpides N."/>
            <person name="Mikhailova N."/>
            <person name="Richardson P."/>
        </authorList>
    </citation>
    <scope>NUCLEOTIDE SEQUENCE [LARGE SCALE GENOMIC DNA]</scope>
    <source>
        <strain>NCIMB 400</strain>
    </source>
</reference>
<dbReference type="EC" id="2.4.2.17" evidence="1"/>
<dbReference type="EMBL" id="CP000447">
    <property type="protein sequence ID" value="ABI71570.1"/>
    <property type="molecule type" value="Genomic_DNA"/>
</dbReference>
<dbReference type="RefSeq" id="WP_011637186.1">
    <property type="nucleotide sequence ID" value="NC_008345.1"/>
</dbReference>
<dbReference type="SMR" id="Q083J5"/>
<dbReference type="STRING" id="318167.Sfri_1720"/>
<dbReference type="KEGG" id="sfr:Sfri_1720"/>
<dbReference type="eggNOG" id="COG0040">
    <property type="taxonomic scope" value="Bacteria"/>
</dbReference>
<dbReference type="HOGENOM" id="CLU_038115_1_0_6"/>
<dbReference type="OrthoDB" id="9801867at2"/>
<dbReference type="UniPathway" id="UPA00031">
    <property type="reaction ID" value="UER00006"/>
</dbReference>
<dbReference type="Proteomes" id="UP000000684">
    <property type="component" value="Chromosome"/>
</dbReference>
<dbReference type="GO" id="GO:0005737">
    <property type="term" value="C:cytoplasm"/>
    <property type="evidence" value="ECO:0007669"/>
    <property type="project" value="UniProtKB-SubCell"/>
</dbReference>
<dbReference type="GO" id="GO:0005524">
    <property type="term" value="F:ATP binding"/>
    <property type="evidence" value="ECO:0007669"/>
    <property type="project" value="UniProtKB-KW"/>
</dbReference>
<dbReference type="GO" id="GO:0003879">
    <property type="term" value="F:ATP phosphoribosyltransferase activity"/>
    <property type="evidence" value="ECO:0007669"/>
    <property type="project" value="UniProtKB-UniRule"/>
</dbReference>
<dbReference type="GO" id="GO:0000287">
    <property type="term" value="F:magnesium ion binding"/>
    <property type="evidence" value="ECO:0007669"/>
    <property type="project" value="UniProtKB-UniRule"/>
</dbReference>
<dbReference type="GO" id="GO:0000105">
    <property type="term" value="P:L-histidine biosynthetic process"/>
    <property type="evidence" value="ECO:0007669"/>
    <property type="project" value="UniProtKB-UniRule"/>
</dbReference>
<dbReference type="CDD" id="cd13592">
    <property type="entry name" value="PBP2_HisGL2"/>
    <property type="match status" value="1"/>
</dbReference>
<dbReference type="FunFam" id="3.30.70.120:FF:000002">
    <property type="entry name" value="ATP phosphoribosyltransferase"/>
    <property type="match status" value="1"/>
</dbReference>
<dbReference type="FunFam" id="3.40.190.10:FF:000008">
    <property type="entry name" value="ATP phosphoribosyltransferase"/>
    <property type="match status" value="1"/>
</dbReference>
<dbReference type="Gene3D" id="3.30.70.120">
    <property type="match status" value="1"/>
</dbReference>
<dbReference type="Gene3D" id="3.40.190.10">
    <property type="entry name" value="Periplasmic binding protein-like II"/>
    <property type="match status" value="2"/>
</dbReference>
<dbReference type="HAMAP" id="MF_00079">
    <property type="entry name" value="HisG_Long"/>
    <property type="match status" value="1"/>
</dbReference>
<dbReference type="InterPro" id="IPR020621">
    <property type="entry name" value="ATP-PRT_HisG_long"/>
</dbReference>
<dbReference type="InterPro" id="IPR013820">
    <property type="entry name" value="ATP_PRibTrfase_cat"/>
</dbReference>
<dbReference type="InterPro" id="IPR018198">
    <property type="entry name" value="ATP_PRibTrfase_CS"/>
</dbReference>
<dbReference type="InterPro" id="IPR001348">
    <property type="entry name" value="ATP_PRibTrfase_HisG"/>
</dbReference>
<dbReference type="InterPro" id="IPR013115">
    <property type="entry name" value="HisG_C"/>
</dbReference>
<dbReference type="InterPro" id="IPR011322">
    <property type="entry name" value="N-reg_PII-like_a/b"/>
</dbReference>
<dbReference type="InterPro" id="IPR015867">
    <property type="entry name" value="N-reg_PII/ATP_PRibTrfase_C"/>
</dbReference>
<dbReference type="NCBIfam" id="TIGR00070">
    <property type="entry name" value="hisG"/>
    <property type="match status" value="1"/>
</dbReference>
<dbReference type="NCBIfam" id="TIGR03455">
    <property type="entry name" value="HisG_C-term"/>
    <property type="match status" value="1"/>
</dbReference>
<dbReference type="PANTHER" id="PTHR21403:SF8">
    <property type="entry name" value="ATP PHOSPHORIBOSYLTRANSFERASE"/>
    <property type="match status" value="1"/>
</dbReference>
<dbReference type="PANTHER" id="PTHR21403">
    <property type="entry name" value="ATP PHOSPHORIBOSYLTRANSFERASE ATP-PRTASE"/>
    <property type="match status" value="1"/>
</dbReference>
<dbReference type="Pfam" id="PF01634">
    <property type="entry name" value="HisG"/>
    <property type="match status" value="1"/>
</dbReference>
<dbReference type="Pfam" id="PF08029">
    <property type="entry name" value="HisG_C"/>
    <property type="match status" value="1"/>
</dbReference>
<dbReference type="SUPFAM" id="SSF54913">
    <property type="entry name" value="GlnB-like"/>
    <property type="match status" value="1"/>
</dbReference>
<dbReference type="SUPFAM" id="SSF53850">
    <property type="entry name" value="Periplasmic binding protein-like II"/>
    <property type="match status" value="1"/>
</dbReference>
<dbReference type="PROSITE" id="PS01316">
    <property type="entry name" value="ATP_P_PHORIBOSYLTR"/>
    <property type="match status" value="1"/>
</dbReference>
<protein>
    <recommendedName>
        <fullName evidence="1">ATP phosphoribosyltransferase</fullName>
        <shortName evidence="1">ATP-PRT</shortName>
        <shortName evidence="1">ATP-PRTase</shortName>
        <ecNumber evidence="1">2.4.2.17</ecNumber>
    </recommendedName>
</protein>
<name>HIS1_SHEFN</name>
<organism>
    <name type="scientific">Shewanella frigidimarina (strain NCIMB 400)</name>
    <dbReference type="NCBI Taxonomy" id="318167"/>
    <lineage>
        <taxon>Bacteria</taxon>
        <taxon>Pseudomonadati</taxon>
        <taxon>Pseudomonadota</taxon>
        <taxon>Gammaproteobacteria</taxon>
        <taxon>Alteromonadales</taxon>
        <taxon>Shewanellaceae</taxon>
        <taxon>Shewanella</taxon>
    </lineage>
</organism>
<feature type="chain" id="PRO_1000004502" description="ATP phosphoribosyltransferase">
    <location>
        <begin position="1"/>
        <end position="299"/>
    </location>
</feature>
<keyword id="KW-0028">Amino-acid biosynthesis</keyword>
<keyword id="KW-0067">ATP-binding</keyword>
<keyword id="KW-0963">Cytoplasm</keyword>
<keyword id="KW-0328">Glycosyltransferase</keyword>
<keyword id="KW-0368">Histidine biosynthesis</keyword>
<keyword id="KW-0460">Magnesium</keyword>
<keyword id="KW-0479">Metal-binding</keyword>
<keyword id="KW-0547">Nucleotide-binding</keyword>
<keyword id="KW-1185">Reference proteome</keyword>
<keyword id="KW-0808">Transferase</keyword>
<gene>
    <name evidence="1" type="primary">hisG</name>
    <name type="ordered locus">Sfri_1720</name>
</gene>
<sequence>MSQSKRLRIAIQKSGRLSKESQQLLKSCGVKFNVNEQRLIAHADNMPIDLLRVRDDDIPGLVMDGVVDLGIIGENVLEEEQIERQLAGKPAECTKLRELDFGSCRLSLAVPNEFEYKDANSLEGLRIATSYPNLLRRFMQEKGINYSDCMLKGSVEVAPRAGLSDGICDLVSTGATLEANGLYETEVIYRSMACIIQSNKTQSTEKQALINKILSRINGVIRARESKYILLHAPVETLDQIVALLPGAENPTVLPLNDDTNRVAIHVVSTEDLFWDTMEELTALGASSILVMPIEKMMG</sequence>
<evidence type="ECO:0000255" key="1">
    <source>
        <dbReference type="HAMAP-Rule" id="MF_00079"/>
    </source>
</evidence>
<comment type="function">
    <text evidence="1">Catalyzes the condensation of ATP and 5-phosphoribose 1-diphosphate to form N'-(5'-phosphoribosyl)-ATP (PR-ATP). Has a crucial role in the pathway because the rate of histidine biosynthesis seems to be controlled primarily by regulation of HisG enzymatic activity.</text>
</comment>
<comment type="catalytic activity">
    <reaction evidence="1">
        <text>1-(5-phospho-beta-D-ribosyl)-ATP + diphosphate = 5-phospho-alpha-D-ribose 1-diphosphate + ATP</text>
        <dbReference type="Rhea" id="RHEA:18473"/>
        <dbReference type="ChEBI" id="CHEBI:30616"/>
        <dbReference type="ChEBI" id="CHEBI:33019"/>
        <dbReference type="ChEBI" id="CHEBI:58017"/>
        <dbReference type="ChEBI" id="CHEBI:73183"/>
        <dbReference type="EC" id="2.4.2.17"/>
    </reaction>
</comment>
<comment type="cofactor">
    <cofactor evidence="1">
        <name>Mg(2+)</name>
        <dbReference type="ChEBI" id="CHEBI:18420"/>
    </cofactor>
</comment>
<comment type="activity regulation">
    <text evidence="1">Feedback inhibited by histidine.</text>
</comment>
<comment type="pathway">
    <text evidence="1">Amino-acid biosynthesis; L-histidine biosynthesis; L-histidine from 5-phospho-alpha-D-ribose 1-diphosphate: step 1/9.</text>
</comment>
<comment type="subcellular location">
    <subcellularLocation>
        <location evidence="1">Cytoplasm</location>
    </subcellularLocation>
</comment>
<comment type="similarity">
    <text evidence="1">Belongs to the ATP phosphoribosyltransferase family. Long subfamily.</text>
</comment>
<proteinExistence type="inferred from homology"/>
<accession>Q083J5</accession>